<proteinExistence type="inferred from homology"/>
<dbReference type="EMBL" id="AE017197">
    <property type="protein sequence ID" value="AAU03675.1"/>
    <property type="molecule type" value="Genomic_DNA"/>
</dbReference>
<dbReference type="RefSeq" id="WP_011190662.1">
    <property type="nucleotide sequence ID" value="NC_006142.1"/>
</dbReference>
<dbReference type="SMR" id="Q68XG7"/>
<dbReference type="KEGG" id="rty:RT0191"/>
<dbReference type="eggNOG" id="COG1076">
    <property type="taxonomic scope" value="Bacteria"/>
</dbReference>
<dbReference type="HOGENOM" id="CLU_068529_2_0_5"/>
<dbReference type="OrthoDB" id="287587at2"/>
<dbReference type="Proteomes" id="UP000000604">
    <property type="component" value="Chromosome"/>
</dbReference>
<dbReference type="GO" id="GO:0001671">
    <property type="term" value="F:ATPase activator activity"/>
    <property type="evidence" value="ECO:0007669"/>
    <property type="project" value="InterPro"/>
</dbReference>
<dbReference type="GO" id="GO:0051087">
    <property type="term" value="F:protein-folding chaperone binding"/>
    <property type="evidence" value="ECO:0007669"/>
    <property type="project" value="InterPro"/>
</dbReference>
<dbReference type="GO" id="GO:0044571">
    <property type="term" value="P:[2Fe-2S] cluster assembly"/>
    <property type="evidence" value="ECO:0007669"/>
    <property type="project" value="InterPro"/>
</dbReference>
<dbReference type="GO" id="GO:0051259">
    <property type="term" value="P:protein complex oligomerization"/>
    <property type="evidence" value="ECO:0007669"/>
    <property type="project" value="InterPro"/>
</dbReference>
<dbReference type="GO" id="GO:0006457">
    <property type="term" value="P:protein folding"/>
    <property type="evidence" value="ECO:0007669"/>
    <property type="project" value="UniProtKB-UniRule"/>
</dbReference>
<dbReference type="CDD" id="cd06257">
    <property type="entry name" value="DnaJ"/>
    <property type="match status" value="1"/>
</dbReference>
<dbReference type="Gene3D" id="1.10.287.110">
    <property type="entry name" value="DnaJ domain"/>
    <property type="match status" value="1"/>
</dbReference>
<dbReference type="Gene3D" id="1.20.1280.20">
    <property type="entry name" value="HscB, C-terminal domain"/>
    <property type="match status" value="1"/>
</dbReference>
<dbReference type="HAMAP" id="MF_00682">
    <property type="entry name" value="HscB"/>
    <property type="match status" value="1"/>
</dbReference>
<dbReference type="InterPro" id="IPR001623">
    <property type="entry name" value="DnaJ_domain"/>
</dbReference>
<dbReference type="InterPro" id="IPR004640">
    <property type="entry name" value="HscB"/>
</dbReference>
<dbReference type="InterPro" id="IPR036386">
    <property type="entry name" value="HscB_C_sf"/>
</dbReference>
<dbReference type="InterPro" id="IPR009073">
    <property type="entry name" value="HscB_oligo_C"/>
</dbReference>
<dbReference type="InterPro" id="IPR036869">
    <property type="entry name" value="J_dom_sf"/>
</dbReference>
<dbReference type="NCBIfam" id="TIGR00714">
    <property type="entry name" value="hscB"/>
    <property type="match status" value="1"/>
</dbReference>
<dbReference type="PANTHER" id="PTHR14021">
    <property type="entry name" value="IRON-SULFUR CLUSTER CO-CHAPERONE PROTEIN HSCB"/>
    <property type="match status" value="1"/>
</dbReference>
<dbReference type="PANTHER" id="PTHR14021:SF15">
    <property type="entry name" value="IRON-SULFUR CLUSTER CO-CHAPERONE PROTEIN HSCB"/>
    <property type="match status" value="1"/>
</dbReference>
<dbReference type="Pfam" id="PF00226">
    <property type="entry name" value="DnaJ"/>
    <property type="match status" value="1"/>
</dbReference>
<dbReference type="Pfam" id="PF07743">
    <property type="entry name" value="HSCB_C"/>
    <property type="match status" value="1"/>
</dbReference>
<dbReference type="SMART" id="SM00271">
    <property type="entry name" value="DnaJ"/>
    <property type="match status" value="1"/>
</dbReference>
<dbReference type="SUPFAM" id="SSF46565">
    <property type="entry name" value="Chaperone J-domain"/>
    <property type="match status" value="1"/>
</dbReference>
<dbReference type="SUPFAM" id="SSF47144">
    <property type="entry name" value="HSC20 (HSCB), C-terminal oligomerisation domain"/>
    <property type="match status" value="1"/>
</dbReference>
<dbReference type="PROSITE" id="PS50076">
    <property type="entry name" value="DNAJ_2"/>
    <property type="match status" value="1"/>
</dbReference>
<accession>Q68XG7</accession>
<name>HSCB_RICTY</name>
<gene>
    <name type="primary">hscB</name>
    <name type="ordered locus">RT0191</name>
</gene>
<organism>
    <name type="scientific">Rickettsia typhi (strain ATCC VR-144 / Wilmington)</name>
    <dbReference type="NCBI Taxonomy" id="257363"/>
    <lineage>
        <taxon>Bacteria</taxon>
        <taxon>Pseudomonadati</taxon>
        <taxon>Pseudomonadota</taxon>
        <taxon>Alphaproteobacteria</taxon>
        <taxon>Rickettsiales</taxon>
        <taxon>Rickettsiaceae</taxon>
        <taxon>Rickettsieae</taxon>
        <taxon>Rickettsia</taxon>
        <taxon>typhus group</taxon>
    </lineage>
</organism>
<keyword id="KW-0143">Chaperone</keyword>
<evidence type="ECO:0000250" key="1"/>
<evidence type="ECO:0000305" key="2"/>
<protein>
    <recommendedName>
        <fullName>Co-chaperone protein HscB homolog</fullName>
    </recommendedName>
</protein>
<sequence length="166" mass="19899">MQNYFQLLELPQEYNIDLKILEKQYFAMQIKYHPDKAKTVQEKEQNLIIATELNKAYSTLKDALKRAEYMLLLQNINLNDEKIRSLLSPLELSIFWNEMERIENTILFSDLEKIKHKYELMQQQNINSLKQAFEKRNLSDATIHTSKLKYIRTLQNKLQEKIKSCK</sequence>
<reference key="1">
    <citation type="journal article" date="2004" name="J. Bacteriol.">
        <title>Complete genome sequence of Rickettsia typhi and comparison with sequences of other Rickettsiae.</title>
        <authorList>
            <person name="McLeod M.P."/>
            <person name="Qin X."/>
            <person name="Karpathy S.E."/>
            <person name="Gioia J."/>
            <person name="Highlander S.K."/>
            <person name="Fox G.E."/>
            <person name="McNeill T.Z."/>
            <person name="Jiang H."/>
            <person name="Muzny D."/>
            <person name="Jacob L.S."/>
            <person name="Hawes A.C."/>
            <person name="Sodergren E."/>
            <person name="Gill R."/>
            <person name="Hume J."/>
            <person name="Morgan M."/>
            <person name="Fan G."/>
            <person name="Amin A.G."/>
            <person name="Gibbs R.A."/>
            <person name="Hong C."/>
            <person name="Yu X.-J."/>
            <person name="Walker D.H."/>
            <person name="Weinstock G.M."/>
        </authorList>
    </citation>
    <scope>NUCLEOTIDE SEQUENCE [LARGE SCALE GENOMIC DNA]</scope>
    <source>
        <strain>ATCC VR-144 / Wilmington</strain>
    </source>
</reference>
<comment type="function">
    <text evidence="1">Co-chaperone involved in the maturation of iron-sulfur cluster-containing proteins. Seems to help targeting proteins to be folded toward HscA (By similarity).</text>
</comment>
<comment type="subunit">
    <text evidence="1">Interacts with HscA and stimulates its ATPase activity.</text>
</comment>
<comment type="similarity">
    <text evidence="2">Belongs to the HscB family.</text>
</comment>
<feature type="chain" id="PRO_0000286449" description="Co-chaperone protein HscB homolog">
    <location>
        <begin position="1"/>
        <end position="166"/>
    </location>
</feature>
<feature type="domain" description="J">
    <location>
        <begin position="3"/>
        <end position="73"/>
    </location>
</feature>